<feature type="chain" id="PRO_0000150775" description="Olfactory receptor 52E6">
    <location>
        <begin position="1"/>
        <end position="313"/>
    </location>
</feature>
<feature type="topological domain" description="Extracellular" evidence="1">
    <location>
        <begin position="1"/>
        <end position="27"/>
    </location>
</feature>
<feature type="transmembrane region" description="Helical; Name=1" evidence="1">
    <location>
        <begin position="28"/>
        <end position="48"/>
    </location>
</feature>
<feature type="topological domain" description="Cytoplasmic" evidence="1">
    <location>
        <begin position="49"/>
        <end position="56"/>
    </location>
</feature>
<feature type="transmembrane region" description="Helical; Name=2" evidence="1">
    <location>
        <begin position="57"/>
        <end position="77"/>
    </location>
</feature>
<feature type="topological domain" description="Extracellular" evidence="1">
    <location>
        <begin position="78"/>
        <end position="101"/>
    </location>
</feature>
<feature type="transmembrane region" description="Helical; Name=3" evidence="1">
    <location>
        <begin position="102"/>
        <end position="122"/>
    </location>
</feature>
<feature type="topological domain" description="Cytoplasmic" evidence="1">
    <location>
        <begin position="123"/>
        <end position="141"/>
    </location>
</feature>
<feature type="transmembrane region" description="Helical; Name=4" evidence="1">
    <location>
        <begin position="142"/>
        <end position="162"/>
    </location>
</feature>
<feature type="topological domain" description="Extracellular" evidence="1">
    <location>
        <begin position="163"/>
        <end position="198"/>
    </location>
</feature>
<feature type="transmembrane region" description="Helical; Name=5" evidence="1">
    <location>
        <begin position="199"/>
        <end position="218"/>
    </location>
</feature>
<feature type="topological domain" description="Cytoplasmic" evidence="1">
    <location>
        <begin position="219"/>
        <end position="238"/>
    </location>
</feature>
<feature type="transmembrane region" description="Helical; Name=6" evidence="1">
    <location>
        <begin position="239"/>
        <end position="259"/>
    </location>
</feature>
<feature type="topological domain" description="Extracellular" evidence="1">
    <location>
        <begin position="260"/>
        <end position="274"/>
    </location>
</feature>
<feature type="transmembrane region" description="Helical; Name=7" evidence="1">
    <location>
        <begin position="275"/>
        <end position="295"/>
    </location>
</feature>
<feature type="topological domain" description="Cytoplasmic" evidence="1">
    <location>
        <begin position="296"/>
        <end position="313"/>
    </location>
</feature>
<feature type="glycosylation site" description="N-linked (GlcNAc...) asparagine" evidence="1">
    <location>
        <position position="5"/>
    </location>
</feature>
<feature type="sequence variant" id="VAR_048066" description="In dbSNP:rs4362173.">
    <original>I</original>
    <variation>V</variation>
    <location>
        <position position="39"/>
    </location>
</feature>
<feature type="sequence variant" id="VAR_048067" description="In dbSNP:rs10769272.">
    <original>F</original>
    <variation>L</variation>
    <location>
        <position position="48"/>
    </location>
</feature>
<feature type="sequence variant" id="VAR_048068" description="In dbSNP:rs4495918.">
    <original>C</original>
    <variation>F</variation>
    <location>
        <position position="64"/>
    </location>
</feature>
<feature type="sequence variant" id="VAR_048069" description="In dbSNP:rs4592451.">
    <original>S</original>
    <variation>P</variation>
    <location>
        <position position="95"/>
    </location>
</feature>
<feature type="sequence variant" id="VAR_048070" description="In dbSNP:rs10838719.">
    <original>W</original>
    <variation>R</variation>
    <location>
        <position position="133"/>
    </location>
</feature>
<feature type="sequence variant" id="VAR_048071" description="In dbSNP:rs4357719.">
    <original>I</original>
    <variation>V</variation>
    <location>
        <position position="159"/>
    </location>
</feature>
<feature type="sequence variant" id="VAR_048072" description="In dbSNP:rs7943698.">
    <original>F</original>
    <variation>Y</variation>
    <location>
        <position position="170"/>
    </location>
</feature>
<feature type="sequence variant" id="VAR_048073" description="In dbSNP:rs10742809.">
    <original>M</original>
    <variation>R</variation>
    <location>
        <position position="199"/>
    </location>
</feature>
<organism>
    <name type="scientific">Homo sapiens</name>
    <name type="common">Human</name>
    <dbReference type="NCBI Taxonomy" id="9606"/>
    <lineage>
        <taxon>Eukaryota</taxon>
        <taxon>Metazoa</taxon>
        <taxon>Chordata</taxon>
        <taxon>Craniata</taxon>
        <taxon>Vertebrata</taxon>
        <taxon>Euteleostomi</taxon>
        <taxon>Mammalia</taxon>
        <taxon>Eutheria</taxon>
        <taxon>Euarchontoglires</taxon>
        <taxon>Primates</taxon>
        <taxon>Haplorrhini</taxon>
        <taxon>Catarrhini</taxon>
        <taxon>Hominidae</taxon>
        <taxon>Homo</taxon>
    </lineage>
</organism>
<evidence type="ECO:0000255" key="1"/>
<evidence type="ECO:0000255" key="2">
    <source>
        <dbReference type="PROSITE-ProRule" id="PRU00521"/>
    </source>
</evidence>
<evidence type="ECO:0000305" key="3"/>
<sequence length="313" mass="35524">MPIANDTQFHTSSFLLLGIPGLEDVHIWIGFPFFSVYLIALLGNAAIFFVIQTEQSLHEPMYYCLAMLDSIDLSLSTATIPKMLGIFWFNIKEISFGGYLSQMFFIHFFTVMESIVLVAMAFDRYIAICKPLWYTMILTSKIISLIAGIAVLRSLYMVIPLVFLLLRLPFCGHRIIPHTYCEHMGIARLACASIKVNIMFGLGSISLLLLDVLLIILSHIRILYAVFCLPSWEARLKALNTCGSHIGVILAFSTPAFFSFFTHCFGHDIPQYIHIFLANLYVVVPPTLNPVIYGVRTKHIRETVLRIFFKTDH</sequence>
<comment type="function">
    <text evidence="3">Odorant receptor.</text>
</comment>
<comment type="subcellular location">
    <subcellularLocation>
        <location>Cell membrane</location>
        <topology>Multi-pass membrane protein</topology>
    </subcellularLocation>
</comment>
<comment type="similarity">
    <text evidence="2">Belongs to the G-protein coupled receptor 1 family.</text>
</comment>
<comment type="online information" name="Human Olfactory Receptor Data Exploratorium (HORDE)">
    <link uri="http://genome.weizmann.ac.il/horde/card/index/symbol:OR52E6"/>
</comment>
<name>O52E6_HUMAN</name>
<gene>
    <name type="primary">OR52E6</name>
</gene>
<accession>Q96RD3</accession>
<accession>Q6IFF8</accession>
<keyword id="KW-1003">Cell membrane</keyword>
<keyword id="KW-0297">G-protein coupled receptor</keyword>
<keyword id="KW-0325">Glycoprotein</keyword>
<keyword id="KW-0472">Membrane</keyword>
<keyword id="KW-0552">Olfaction</keyword>
<keyword id="KW-0675">Receptor</keyword>
<keyword id="KW-1185">Reference proteome</keyword>
<keyword id="KW-0716">Sensory transduction</keyword>
<keyword id="KW-0807">Transducer</keyword>
<keyword id="KW-0812">Transmembrane</keyword>
<keyword id="KW-1133">Transmembrane helix</keyword>
<protein>
    <recommendedName>
        <fullName>Olfactory receptor 52E6</fullName>
    </recommendedName>
    <alternativeName>
        <fullName>Olfactory receptor OR11-58</fullName>
    </alternativeName>
</protein>
<reference key="1">
    <citation type="submission" date="2001-07" db="EMBL/GenBank/DDBJ databases">
        <title>Genome-wide discovery and analysis of human seven transmembrane helix receptor genes.</title>
        <authorList>
            <person name="Suwa M."/>
            <person name="Sato T."/>
            <person name="Okouchi I."/>
            <person name="Arita M."/>
            <person name="Futami K."/>
            <person name="Matsumoto S."/>
            <person name="Tsutsumi S."/>
            <person name="Aburatani H."/>
            <person name="Asai K."/>
            <person name="Akiyama Y."/>
        </authorList>
    </citation>
    <scope>NUCLEOTIDE SEQUENCE [GENOMIC DNA]</scope>
</reference>
<reference key="2">
    <citation type="submission" date="2005-09" db="EMBL/GenBank/DDBJ databases">
        <authorList>
            <person name="Mural R.J."/>
            <person name="Istrail S."/>
            <person name="Sutton G.G."/>
            <person name="Florea L."/>
            <person name="Halpern A.L."/>
            <person name="Mobarry C.M."/>
            <person name="Lippert R."/>
            <person name="Walenz B."/>
            <person name="Shatkay H."/>
            <person name="Dew I."/>
            <person name="Miller J.R."/>
            <person name="Flanigan M.J."/>
            <person name="Edwards N.J."/>
            <person name="Bolanos R."/>
            <person name="Fasulo D."/>
            <person name="Halldorsson B.V."/>
            <person name="Hannenhalli S."/>
            <person name="Turner R."/>
            <person name="Yooseph S."/>
            <person name="Lu F."/>
            <person name="Nusskern D.R."/>
            <person name="Shue B.C."/>
            <person name="Zheng X.H."/>
            <person name="Zhong F."/>
            <person name="Delcher A.L."/>
            <person name="Huson D.H."/>
            <person name="Kravitz S.A."/>
            <person name="Mouchard L."/>
            <person name="Reinert K."/>
            <person name="Remington K.A."/>
            <person name="Clark A.G."/>
            <person name="Waterman M.S."/>
            <person name="Eichler E.E."/>
            <person name="Adams M.D."/>
            <person name="Hunkapiller M.W."/>
            <person name="Myers E.W."/>
            <person name="Venter J.C."/>
        </authorList>
    </citation>
    <scope>NUCLEOTIDE SEQUENCE [LARGE SCALE GENOMIC DNA]</scope>
</reference>
<reference key="3">
    <citation type="journal article" date="2002" name="Genomics">
        <title>DEFOG: a practical scheme for deciphering families of genes.</title>
        <authorList>
            <person name="Fuchs T."/>
            <person name="Malecova B."/>
            <person name="Linhart C."/>
            <person name="Sharan R."/>
            <person name="Khen M."/>
            <person name="Herwig R."/>
            <person name="Shmulevich D."/>
            <person name="Elkon R."/>
            <person name="Steinfath M."/>
            <person name="O'Brien J.K."/>
            <person name="Radelof U."/>
            <person name="Lehrach H."/>
            <person name="Lancet D."/>
            <person name="Shamir R."/>
        </authorList>
    </citation>
    <scope>NUCLEOTIDE SEQUENCE [GENOMIC DNA] OF 70-287</scope>
</reference>
<reference key="4">
    <citation type="journal article" date="2004" name="Proc. Natl. Acad. Sci. U.S.A.">
        <title>The human olfactory receptor gene family.</title>
        <authorList>
            <person name="Malnic B."/>
            <person name="Godfrey P.A."/>
            <person name="Buck L.B."/>
        </authorList>
    </citation>
    <scope>IDENTIFICATION</scope>
</reference>
<reference key="5">
    <citation type="journal article" date="2004" name="Proc. Natl. Acad. Sci. U.S.A.">
        <authorList>
            <person name="Malnic B."/>
            <person name="Godfrey P.A."/>
            <person name="Buck L.B."/>
        </authorList>
    </citation>
    <scope>ERRATUM OF PUBMED:14983052</scope>
</reference>
<proteinExistence type="inferred from homology"/>
<dbReference type="EMBL" id="AB065815">
    <property type="protein sequence ID" value="BAC06034.1"/>
    <property type="molecule type" value="Genomic_DNA"/>
</dbReference>
<dbReference type="EMBL" id="CH471064">
    <property type="protein sequence ID" value="EAW68758.1"/>
    <property type="molecule type" value="Genomic_DNA"/>
</dbReference>
<dbReference type="EMBL" id="AF399504">
    <property type="protein sequence ID" value="AAK94989.1"/>
    <property type="molecule type" value="Genomic_DNA"/>
</dbReference>
<dbReference type="EMBL" id="BK004304">
    <property type="protein sequence ID" value="DAA04702.1"/>
    <property type="molecule type" value="Genomic_DNA"/>
</dbReference>
<dbReference type="CCDS" id="CCDS53597.1"/>
<dbReference type="RefSeq" id="NP_001005167.1">
    <property type="nucleotide sequence ID" value="NM_001005167.2"/>
</dbReference>
<dbReference type="SMR" id="Q96RD3"/>
<dbReference type="BioGRID" id="133388">
    <property type="interactions" value="1"/>
</dbReference>
<dbReference type="FunCoup" id="Q96RD3">
    <property type="interactions" value="454"/>
</dbReference>
<dbReference type="STRING" id="9606.ENSP00000328878"/>
<dbReference type="GlyCosmos" id="Q96RD3">
    <property type="glycosylation" value="1 site, No reported glycans"/>
</dbReference>
<dbReference type="GlyGen" id="Q96RD3">
    <property type="glycosylation" value="1 site"/>
</dbReference>
<dbReference type="iPTMnet" id="Q96RD3"/>
<dbReference type="PhosphoSitePlus" id="Q96RD3"/>
<dbReference type="BioMuta" id="OR52E6"/>
<dbReference type="DMDM" id="20532197"/>
<dbReference type="PaxDb" id="9606-ENSP00000328878"/>
<dbReference type="PeptideAtlas" id="Q96RD3"/>
<dbReference type="Antibodypedia" id="57923">
    <property type="antibodies" value="57 antibodies from 16 providers"/>
</dbReference>
<dbReference type="DNASU" id="390078"/>
<dbReference type="Ensembl" id="ENST00000329322.5">
    <property type="protein sequence ID" value="ENSP00000328878.5"/>
    <property type="gene ID" value="ENSG00000205409.3"/>
</dbReference>
<dbReference type="GeneID" id="390078"/>
<dbReference type="KEGG" id="hsa:390078"/>
<dbReference type="MANE-Select" id="ENST00000329322.5">
    <property type="protein sequence ID" value="ENSP00000328878.5"/>
    <property type="RefSeq nucleotide sequence ID" value="NM_001005167.2"/>
    <property type="RefSeq protein sequence ID" value="NP_001005167.1"/>
</dbReference>
<dbReference type="UCSC" id="uc010qzq.3">
    <property type="organism name" value="human"/>
</dbReference>
<dbReference type="AGR" id="HGNC:15215"/>
<dbReference type="CTD" id="390078"/>
<dbReference type="GeneCards" id="OR52E6"/>
<dbReference type="HGNC" id="HGNC:15215">
    <property type="gene designation" value="OR52E6"/>
</dbReference>
<dbReference type="HPA" id="ENSG00000205409">
    <property type="expression patterns" value="Not detected"/>
</dbReference>
<dbReference type="neXtProt" id="NX_Q96RD3"/>
<dbReference type="PharmGKB" id="PA32407"/>
<dbReference type="VEuPathDB" id="HostDB:ENSG00000205409"/>
<dbReference type="eggNOG" id="ENOG502RYU0">
    <property type="taxonomic scope" value="Eukaryota"/>
</dbReference>
<dbReference type="GeneTree" id="ENSGT01090000260056"/>
<dbReference type="HOGENOM" id="CLU_012526_0_0_1"/>
<dbReference type="InParanoid" id="Q96RD3"/>
<dbReference type="OrthoDB" id="9444602at2759"/>
<dbReference type="PAN-GO" id="Q96RD3">
    <property type="GO annotations" value="0 GO annotations based on evolutionary models"/>
</dbReference>
<dbReference type="PhylomeDB" id="Q96RD3"/>
<dbReference type="TreeFam" id="TF343679"/>
<dbReference type="PathwayCommons" id="Q96RD3"/>
<dbReference type="Reactome" id="R-HSA-9752946">
    <property type="pathway name" value="Expression and translocation of olfactory receptors"/>
</dbReference>
<dbReference type="BioGRID-ORCS" id="390078">
    <property type="hits" value="9 hits in 730 CRISPR screens"/>
</dbReference>
<dbReference type="GeneWiki" id="OR52E6"/>
<dbReference type="GenomeRNAi" id="390078"/>
<dbReference type="Pharos" id="Q96RD3">
    <property type="development level" value="Tdark"/>
</dbReference>
<dbReference type="PRO" id="PR:Q96RD3"/>
<dbReference type="Proteomes" id="UP000005640">
    <property type="component" value="Chromosome 11"/>
</dbReference>
<dbReference type="RNAct" id="Q96RD3">
    <property type="molecule type" value="protein"/>
</dbReference>
<dbReference type="Bgee" id="ENSG00000205409">
    <property type="expression patterns" value="Expressed in colonic epithelium and 2 other cell types or tissues"/>
</dbReference>
<dbReference type="ExpressionAtlas" id="Q96RD3">
    <property type="expression patterns" value="baseline and differential"/>
</dbReference>
<dbReference type="GO" id="GO:0005886">
    <property type="term" value="C:plasma membrane"/>
    <property type="evidence" value="ECO:0000318"/>
    <property type="project" value="GO_Central"/>
</dbReference>
<dbReference type="GO" id="GO:0004930">
    <property type="term" value="F:G protein-coupled receptor activity"/>
    <property type="evidence" value="ECO:0007669"/>
    <property type="project" value="UniProtKB-KW"/>
</dbReference>
<dbReference type="GO" id="GO:0004984">
    <property type="term" value="F:olfactory receptor activity"/>
    <property type="evidence" value="ECO:0000318"/>
    <property type="project" value="GO_Central"/>
</dbReference>
<dbReference type="CDD" id="cd15952">
    <property type="entry name" value="7tmA_OR52E-like"/>
    <property type="match status" value="1"/>
</dbReference>
<dbReference type="FunFam" id="1.20.1070.10:FF:000006">
    <property type="entry name" value="Olfactory receptor"/>
    <property type="match status" value="1"/>
</dbReference>
<dbReference type="Gene3D" id="1.20.1070.10">
    <property type="entry name" value="Rhodopsin 7-helix transmembrane proteins"/>
    <property type="match status" value="1"/>
</dbReference>
<dbReference type="InterPro" id="IPR000276">
    <property type="entry name" value="GPCR_Rhodpsn"/>
</dbReference>
<dbReference type="InterPro" id="IPR017452">
    <property type="entry name" value="GPCR_Rhodpsn_7TM"/>
</dbReference>
<dbReference type="InterPro" id="IPR000725">
    <property type="entry name" value="Olfact_rcpt"/>
</dbReference>
<dbReference type="InterPro" id="IPR050402">
    <property type="entry name" value="OR51/52/56-like"/>
</dbReference>
<dbReference type="PANTHER" id="PTHR26450:SF175">
    <property type="entry name" value="OLFACTORY RECEPTOR 52E6"/>
    <property type="match status" value="1"/>
</dbReference>
<dbReference type="PANTHER" id="PTHR26450">
    <property type="entry name" value="OLFACTORY RECEPTOR 56B1-RELATED"/>
    <property type="match status" value="1"/>
</dbReference>
<dbReference type="Pfam" id="PF13853">
    <property type="entry name" value="7tm_4"/>
    <property type="match status" value="1"/>
</dbReference>
<dbReference type="PRINTS" id="PR00237">
    <property type="entry name" value="GPCRRHODOPSN"/>
</dbReference>
<dbReference type="PRINTS" id="PR00245">
    <property type="entry name" value="OLFACTORYR"/>
</dbReference>
<dbReference type="SUPFAM" id="SSF81321">
    <property type="entry name" value="Family A G protein-coupled receptor-like"/>
    <property type="match status" value="1"/>
</dbReference>
<dbReference type="PROSITE" id="PS00237">
    <property type="entry name" value="G_PROTEIN_RECEP_F1_1"/>
    <property type="match status" value="1"/>
</dbReference>
<dbReference type="PROSITE" id="PS50262">
    <property type="entry name" value="G_PROTEIN_RECEP_F1_2"/>
    <property type="match status" value="1"/>
</dbReference>